<evidence type="ECO:0000250" key="1">
    <source>
        <dbReference type="UniProtKB" id="P22610"/>
    </source>
</evidence>
<evidence type="ECO:0000250" key="2">
    <source>
        <dbReference type="UniProtKB" id="P25960"/>
    </source>
</evidence>
<evidence type="ECO:0000255" key="3"/>
<evidence type="ECO:0000305" key="4"/>
<accession>P31711</accession>
<gene>
    <name type="primary">outO</name>
</gene>
<organism>
    <name type="scientific">Dickeya chrysanthemi</name>
    <name type="common">Pectobacterium chrysanthemi</name>
    <name type="synonym">Erwinia chrysanthemi</name>
    <dbReference type="NCBI Taxonomy" id="556"/>
    <lineage>
        <taxon>Bacteria</taxon>
        <taxon>Pseudomonadati</taxon>
        <taxon>Pseudomonadota</taxon>
        <taxon>Gammaproteobacteria</taxon>
        <taxon>Enterobacterales</taxon>
        <taxon>Pectobacteriaceae</taxon>
        <taxon>Dickeya</taxon>
    </lineage>
</organism>
<comment type="function">
    <text evidence="2">Plays a role in type II pseudopili formation by proteolytically removing the leader sequence from substrate proteins and subsequently monomethylating the alpha-amino group of the newly exposed N-terminal phenylalanine. Substrates include proteins required for biogenesis of the type II general secretory apparatus.</text>
</comment>
<comment type="catalytic activity">
    <reaction evidence="1">
        <text>Typically cleaves a -Gly-|-Phe- bond to release an N-terminal, basic peptide of 5-8 residues from type IV prepilin, and then N-methylates the new N-terminal amino group, the methyl donor being S-adenosyl-L-methionine.</text>
        <dbReference type="EC" id="3.4.23.43"/>
    </reaction>
</comment>
<comment type="subcellular location">
    <subcellularLocation>
        <location evidence="1">Cell inner membrane</location>
        <topology evidence="1">Multi-pass membrane protein</topology>
    </subcellularLocation>
</comment>
<comment type="similarity">
    <text evidence="4">Belongs to the peptidase A24 family.</text>
</comment>
<name>LEP4_DICCH</name>
<sequence length="283" mass="31355">MDLIAFANTFPRVWLLALLLLGLIIGSFLNVVIYRLPLMLERSWRQEARFHLGLPAGRPLARYDLCWPPSSCPHCHQRLRMRDNIPLLSWIWLRGRAHCCGGAVSWRYPLIELLSGLSFLLAGLLWQPGLALLGALLCFGIFVALAAIDARTQLLPDVMTLPLLWGGLLFNLADTFVPLEQAVVGAVAGYLSLWLIYWAFRLLSGREALGHGDFKLLAALGAWLGWQALPNLVLIASLTGLTATLLWQRIHRLSMQQPLAFGPWLAVSGAMGLVLNVLGGWSH</sequence>
<keyword id="KW-0997">Cell inner membrane</keyword>
<keyword id="KW-1003">Cell membrane</keyword>
<keyword id="KW-0378">Hydrolase</keyword>
<keyword id="KW-0472">Membrane</keyword>
<keyword id="KW-0489">Methyltransferase</keyword>
<keyword id="KW-0511">Multifunctional enzyme</keyword>
<keyword id="KW-0645">Protease</keyword>
<keyword id="KW-0949">S-adenosyl-L-methionine</keyword>
<keyword id="KW-0808">Transferase</keyword>
<keyword id="KW-0812">Transmembrane</keyword>
<keyword id="KW-1133">Transmembrane helix</keyword>
<reference key="1">
    <citation type="journal article" date="1992" name="J. Bacteriol.">
        <title>Analysis of eight out genes in a cluster required for pectic enzyme secretion by Erwinia chrysanthemi: sequence comparison with secretion genes from other Gram-negative bacteria.</title>
        <authorList>
            <person name="Lindeberg M."/>
            <person name="Collmer A."/>
        </authorList>
    </citation>
    <scope>NUCLEOTIDE SEQUENCE [GENOMIC DNA]</scope>
    <source>
        <strain>EC16</strain>
    </source>
</reference>
<dbReference type="EC" id="3.4.23.43" evidence="1"/>
<dbReference type="EC" id="2.1.1.-" evidence="1"/>
<dbReference type="EMBL" id="L02214">
    <property type="protein sequence ID" value="AAA24841.1"/>
    <property type="molecule type" value="Genomic_DNA"/>
</dbReference>
<dbReference type="PIR" id="C47755">
    <property type="entry name" value="C47755"/>
</dbReference>
<dbReference type="MEROPS" id="A24.A10"/>
<dbReference type="GO" id="GO:0005886">
    <property type="term" value="C:plasma membrane"/>
    <property type="evidence" value="ECO:0007669"/>
    <property type="project" value="UniProtKB-SubCell"/>
</dbReference>
<dbReference type="GO" id="GO:0004190">
    <property type="term" value="F:aspartic-type endopeptidase activity"/>
    <property type="evidence" value="ECO:0007669"/>
    <property type="project" value="UniProtKB-EC"/>
</dbReference>
<dbReference type="GO" id="GO:0008168">
    <property type="term" value="F:methyltransferase activity"/>
    <property type="evidence" value="ECO:0007669"/>
    <property type="project" value="UniProtKB-KW"/>
</dbReference>
<dbReference type="GO" id="GO:0032259">
    <property type="term" value="P:methylation"/>
    <property type="evidence" value="ECO:0007669"/>
    <property type="project" value="UniProtKB-KW"/>
</dbReference>
<dbReference type="GO" id="GO:0006465">
    <property type="term" value="P:signal peptide processing"/>
    <property type="evidence" value="ECO:0007669"/>
    <property type="project" value="TreeGrafter"/>
</dbReference>
<dbReference type="Gene3D" id="1.20.120.1220">
    <property type="match status" value="1"/>
</dbReference>
<dbReference type="InterPro" id="IPR014032">
    <property type="entry name" value="Peptidase_A24A_bac"/>
</dbReference>
<dbReference type="InterPro" id="IPR000045">
    <property type="entry name" value="Prepilin_IV_endopep_pep"/>
</dbReference>
<dbReference type="InterPro" id="IPR010627">
    <property type="entry name" value="Prepilin_pept_A24_N"/>
</dbReference>
<dbReference type="InterPro" id="IPR050882">
    <property type="entry name" value="Prepilin_peptidase/N-MTase"/>
</dbReference>
<dbReference type="PANTHER" id="PTHR30487:SF0">
    <property type="entry name" value="PREPILIN LEADER PEPTIDASE_N-METHYLTRANSFERASE-RELATED"/>
    <property type="match status" value="1"/>
</dbReference>
<dbReference type="PANTHER" id="PTHR30487">
    <property type="entry name" value="TYPE 4 PREPILIN-LIKE PROTEINS LEADER PEPTIDE-PROCESSING ENZYME"/>
    <property type="match status" value="1"/>
</dbReference>
<dbReference type="Pfam" id="PF06750">
    <property type="entry name" value="A24_N_bact"/>
    <property type="match status" value="1"/>
</dbReference>
<dbReference type="Pfam" id="PF01478">
    <property type="entry name" value="Peptidase_A24"/>
    <property type="match status" value="1"/>
</dbReference>
<dbReference type="PRINTS" id="PR00864">
    <property type="entry name" value="PREPILNPTASE"/>
</dbReference>
<protein>
    <recommendedName>
        <fullName>Prepilin leader peptidase/N-methyltransferase</fullName>
    </recommendedName>
    <alternativeName>
        <fullName>Pectic enzymes secretion protein OutO</fullName>
    </alternativeName>
    <domain>
        <recommendedName>
            <fullName>Leader peptidase</fullName>
            <ecNumber evidence="1">3.4.23.43</ecNumber>
        </recommendedName>
        <alternativeName>
            <fullName>Prepilin peptidase</fullName>
        </alternativeName>
    </domain>
    <domain>
        <recommendedName>
            <fullName>N-methyltransferase</fullName>
            <ecNumber evidence="1">2.1.1.-</ecNumber>
        </recommendedName>
    </domain>
</protein>
<feature type="chain" id="PRO_0000192620" description="Prepilin leader peptidase/N-methyltransferase">
    <location>
        <begin position="1"/>
        <end position="283"/>
    </location>
</feature>
<feature type="transmembrane region" description="Helical" evidence="3">
    <location>
        <begin position="13"/>
        <end position="33"/>
    </location>
</feature>
<feature type="transmembrane region" description="Helical" evidence="3">
    <location>
        <begin position="106"/>
        <end position="126"/>
    </location>
</feature>
<feature type="transmembrane region" description="Helical" evidence="3">
    <location>
        <begin position="128"/>
        <end position="148"/>
    </location>
</feature>
<feature type="transmembrane region" description="Helical" evidence="3">
    <location>
        <begin position="153"/>
        <end position="173"/>
    </location>
</feature>
<feature type="transmembrane region" description="Helical" evidence="3">
    <location>
        <begin position="176"/>
        <end position="196"/>
    </location>
</feature>
<feature type="transmembrane region" description="Helical" evidence="3">
    <location>
        <begin position="216"/>
        <end position="236"/>
    </location>
</feature>
<feature type="transmembrane region" description="Helical" evidence="3">
    <location>
        <begin position="259"/>
        <end position="279"/>
    </location>
</feature>
<proteinExistence type="inferred from homology"/>